<sequence>MATFVSELEAAKKSLSEALGENVKQYWANLKLWFKQKISKEEFDIEARRLLTQENVHSHNDFLLAILTRCQILISAPEGSGSLNSATKPGKPKGKKKISSVRQKFDHRFQPQNPLAGAQQFVSRDPQEDDELKLCSHTMSLPTRGQLEGRMIVTAFEHGLDNVTEEAVTIVICALEKHLKDLLTSVVSRRKAHRLKDGHFRYAFGCNVNPQPYLRNSLAAYNQLIECPPVLSSPTGTPNSGTYVHPDDAEQQAALLLACSGDNLPASLPPVNMYDLLEGLQVHREVIPSHTVYALNMERILMKLWHPNREELQQDEIHRQRLAAKEGLLLC</sequence>
<dbReference type="EMBL" id="BC074112">
    <property type="protein sequence ID" value="AAH74112.1"/>
    <property type="molecule type" value="mRNA"/>
</dbReference>
<dbReference type="SMR" id="Q6GMF2"/>
<dbReference type="OMA" id="NIMTEDQ"/>
<dbReference type="Proteomes" id="UP000186698">
    <property type="component" value="Unplaced"/>
</dbReference>
<dbReference type="GO" id="GO:0005634">
    <property type="term" value="C:nucleus"/>
    <property type="evidence" value="ECO:0007669"/>
    <property type="project" value="UniProtKB-SubCell"/>
</dbReference>
<dbReference type="GO" id="GO:0000124">
    <property type="term" value="C:SAGA complex"/>
    <property type="evidence" value="ECO:0000318"/>
    <property type="project" value="GO_Central"/>
</dbReference>
<dbReference type="GO" id="GO:0003713">
    <property type="term" value="F:transcription coactivator activity"/>
    <property type="evidence" value="ECO:0000318"/>
    <property type="project" value="GO_Central"/>
</dbReference>
<dbReference type="GO" id="GO:0006357">
    <property type="term" value="P:regulation of transcription by RNA polymerase II"/>
    <property type="evidence" value="ECO:0000318"/>
    <property type="project" value="GO_Central"/>
</dbReference>
<dbReference type="CDD" id="cd22934">
    <property type="entry name" value="HFD_TADA1"/>
    <property type="match status" value="1"/>
</dbReference>
<dbReference type="InterPro" id="IPR024738">
    <property type="entry name" value="Hfi1/Tada1"/>
</dbReference>
<dbReference type="PANTHER" id="PTHR21277">
    <property type="entry name" value="TRANSCRIPTIONAL ADAPTER 1"/>
    <property type="match status" value="1"/>
</dbReference>
<dbReference type="PANTHER" id="PTHR21277:SF5">
    <property type="entry name" value="TRANSCRIPTIONAL ADAPTER 1"/>
    <property type="match status" value="1"/>
</dbReference>
<dbReference type="Pfam" id="PF12767">
    <property type="entry name" value="SAGA-Tad1"/>
    <property type="match status" value="2"/>
</dbReference>
<evidence type="ECO:0000250" key="1"/>
<evidence type="ECO:0000256" key="2">
    <source>
        <dbReference type="SAM" id="MobiDB-lite"/>
    </source>
</evidence>
<evidence type="ECO:0000305" key="3"/>
<gene>
    <name type="primary">tada1</name>
    <name type="synonym">tada1l</name>
</gene>
<reference key="1">
    <citation type="submission" date="2004-06" db="EMBL/GenBank/DDBJ databases">
        <authorList>
            <consortium name="NIH - Xenopus Gene Collection (XGC) project"/>
        </authorList>
    </citation>
    <scope>NUCLEOTIDE SEQUENCE [LARGE SCALE MRNA]</scope>
    <source>
        <tissue>Embryo</tissue>
    </source>
</reference>
<name>TADA1_XENLA</name>
<protein>
    <recommendedName>
        <fullName>Transcriptional adapter 1</fullName>
    </recommendedName>
    <alternativeName>
        <fullName>Transcriptional adapter 1-like protein</fullName>
    </alternativeName>
</protein>
<organism>
    <name type="scientific">Xenopus laevis</name>
    <name type="common">African clawed frog</name>
    <dbReference type="NCBI Taxonomy" id="8355"/>
    <lineage>
        <taxon>Eukaryota</taxon>
        <taxon>Metazoa</taxon>
        <taxon>Chordata</taxon>
        <taxon>Craniata</taxon>
        <taxon>Vertebrata</taxon>
        <taxon>Euteleostomi</taxon>
        <taxon>Amphibia</taxon>
        <taxon>Batrachia</taxon>
        <taxon>Anura</taxon>
        <taxon>Pipoidea</taxon>
        <taxon>Pipidae</taxon>
        <taxon>Xenopodinae</taxon>
        <taxon>Xenopus</taxon>
        <taxon>Xenopus</taxon>
    </lineage>
</organism>
<accession>Q6GMF2</accession>
<feature type="chain" id="PRO_0000316020" description="Transcriptional adapter 1">
    <location>
        <begin position="1"/>
        <end position="331"/>
    </location>
</feature>
<feature type="region of interest" description="Disordered" evidence="2">
    <location>
        <begin position="81"/>
        <end position="102"/>
    </location>
</feature>
<feature type="compositionally biased region" description="Basic residues" evidence="2">
    <location>
        <begin position="90"/>
        <end position="99"/>
    </location>
</feature>
<comment type="function">
    <text>Probably involved in transcriptional regulation.</text>
</comment>
<comment type="subcellular location">
    <subcellularLocation>
        <location evidence="1">Nucleus</location>
    </subcellularLocation>
</comment>
<comment type="similarity">
    <text evidence="3">Belongs to the TADA1 family.</text>
</comment>
<keyword id="KW-0539">Nucleus</keyword>
<keyword id="KW-1185">Reference proteome</keyword>
<keyword id="KW-0804">Transcription</keyword>
<keyword id="KW-0805">Transcription regulation</keyword>
<proteinExistence type="evidence at transcript level"/>